<gene>
    <name type="primary">UCRY</name>
    <name evidence="6" type="ordered locus">At2g40765</name>
</gene>
<keyword id="KW-0002">3D-structure</keyword>
<keyword id="KW-0472">Membrane</keyword>
<keyword id="KW-0496">Mitochondrion</keyword>
<keyword id="KW-0999">Mitochondrion inner membrane</keyword>
<keyword id="KW-1185">Reference proteome</keyword>
<keyword id="KW-0812">Transmembrane</keyword>
<keyword id="KW-1133">Transmembrane helix</keyword>
<organism>
    <name type="scientific">Arabidopsis thaliana</name>
    <name type="common">Mouse-ear cress</name>
    <dbReference type="NCBI Taxonomy" id="3702"/>
    <lineage>
        <taxon>Eukaryota</taxon>
        <taxon>Viridiplantae</taxon>
        <taxon>Streptophyta</taxon>
        <taxon>Embryophyta</taxon>
        <taxon>Tracheophyta</taxon>
        <taxon>Spermatophyta</taxon>
        <taxon>Magnoliopsida</taxon>
        <taxon>eudicotyledons</taxon>
        <taxon>Gunneridae</taxon>
        <taxon>Pentapetalae</taxon>
        <taxon>rosids</taxon>
        <taxon>malvids</taxon>
        <taxon>Brassicales</taxon>
        <taxon>Brassicaceae</taxon>
        <taxon>Camelineae</taxon>
        <taxon>Arabidopsis</taxon>
    </lineage>
</organism>
<sequence length="57" mass="5976">MAGTSGLLNAVKPKIQTIDIQAAAGWGIAAAAGAIWVVQPFGWIKKTFIDPPPTEEK</sequence>
<dbReference type="EMBL" id="CP002685">
    <property type="protein sequence ID" value="AEC09875.1"/>
    <property type="molecule type" value="Genomic_DNA"/>
</dbReference>
<dbReference type="EMBL" id="AF370214">
    <property type="protein sequence ID" value="AAK44029.1"/>
    <property type="molecule type" value="mRNA"/>
</dbReference>
<dbReference type="EMBL" id="AY142541">
    <property type="protein sequence ID" value="AAN13123.1"/>
    <property type="molecule type" value="mRNA"/>
</dbReference>
<dbReference type="EMBL" id="AY085666">
    <property type="protein sequence ID" value="AAM62886.1"/>
    <property type="molecule type" value="mRNA"/>
</dbReference>
<dbReference type="RefSeq" id="NP_565941.1">
    <property type="nucleotide sequence ID" value="NM_129639.2"/>
</dbReference>
<dbReference type="PDB" id="8BEL">
    <property type="method" value="EM"/>
    <property type="resolution" value="2.25 A"/>
    <property type="chains" value="J/T=1-57"/>
</dbReference>
<dbReference type="PDB" id="8BPX">
    <property type="method" value="EM"/>
    <property type="resolution" value="2.09 A"/>
    <property type="chains" value="AJ/BJ=1-57"/>
</dbReference>
<dbReference type="PDB" id="8BQ5">
    <property type="method" value="EM"/>
    <property type="resolution" value="2.73 A"/>
    <property type="chains" value="AJ/BJ=1-57"/>
</dbReference>
<dbReference type="PDB" id="8BQ6">
    <property type="method" value="EM"/>
    <property type="resolution" value="2.80 A"/>
    <property type="chains" value="AJ/BJ=1-57"/>
</dbReference>
<dbReference type="PDBsum" id="8BEL"/>
<dbReference type="PDBsum" id="8BPX"/>
<dbReference type="PDBsum" id="8BQ5"/>
<dbReference type="PDBsum" id="8BQ6"/>
<dbReference type="EMDB" id="EMD-16007"/>
<dbReference type="EMDB" id="EMD-16168"/>
<dbReference type="EMDB" id="EMD-16171"/>
<dbReference type="EMDB" id="EMD-16172"/>
<dbReference type="SMR" id="Q94K78"/>
<dbReference type="FunCoup" id="Q94K78">
    <property type="interactions" value="312"/>
</dbReference>
<dbReference type="IntAct" id="Q94K78">
    <property type="interactions" value="6"/>
</dbReference>
<dbReference type="STRING" id="3702.Q94K78"/>
<dbReference type="iPTMnet" id="Q94K78"/>
<dbReference type="PaxDb" id="3702-AT2G40765.1"/>
<dbReference type="ProteomicsDB" id="189046"/>
<dbReference type="EnsemblPlants" id="AT2G40765.1">
    <property type="protein sequence ID" value="AT2G40765.1"/>
    <property type="gene ID" value="AT2G40765"/>
</dbReference>
<dbReference type="GeneID" id="818673"/>
<dbReference type="Gramene" id="AT2G40765.1">
    <property type="protein sequence ID" value="AT2G40765.1"/>
    <property type="gene ID" value="AT2G40765"/>
</dbReference>
<dbReference type="KEGG" id="ath:AT2G40765"/>
<dbReference type="Araport" id="AT2G40765"/>
<dbReference type="TAIR" id="AT2G40765"/>
<dbReference type="eggNOG" id="ENOG502S99R">
    <property type="taxonomic scope" value="Eukaryota"/>
</dbReference>
<dbReference type="HOGENOM" id="CLU_188810_1_0_1"/>
<dbReference type="InParanoid" id="Q94K78"/>
<dbReference type="OMA" id="MAGEVGM"/>
<dbReference type="BioCyc" id="ARA:MONOMERQT-2774"/>
<dbReference type="BioCyc" id="MetaCyc:MONOMERQT-2774"/>
<dbReference type="PRO" id="PR:Q94K78"/>
<dbReference type="Proteomes" id="UP000006548">
    <property type="component" value="Chromosome 2"/>
</dbReference>
<dbReference type="ExpressionAtlas" id="Q94K78">
    <property type="expression patterns" value="baseline and differential"/>
</dbReference>
<dbReference type="GO" id="GO:0005829">
    <property type="term" value="C:cytosol"/>
    <property type="evidence" value="ECO:0007005"/>
    <property type="project" value="TAIR"/>
</dbReference>
<dbReference type="GO" id="GO:0005743">
    <property type="term" value="C:mitochondrial inner membrane"/>
    <property type="evidence" value="ECO:0007669"/>
    <property type="project" value="UniProtKB-SubCell"/>
</dbReference>
<dbReference type="GO" id="GO:0005739">
    <property type="term" value="C:mitochondrion"/>
    <property type="evidence" value="ECO:0007005"/>
    <property type="project" value="TAIR"/>
</dbReference>
<comment type="function">
    <text evidence="1">Component of the ubiquinol-cytochrome c oxidoreductase, a multisubunit transmembrane complex that is part of the mitochondrial electron transport chain which drives oxidative phosphorylation. The respiratory chain contains 3 multisubunit complexes succinate dehydrogenase (complex II, CII), ubiquinol-cytochrome c oxidoreductase (cytochrome b-c1 complex, complex III, CIII) and cytochrome c oxidase (complex IV, CIV), that cooperate to transfer electrons derived from NADH and succinate to molecular oxygen, creating an electrochemical gradient over the inner membrane that drives transmembrane transport and the ATP synthase. The cytochrome b-c1 complex catalyzes electron transfer from ubiquinol to cytochrome c, linking this redox reaction to translocation of protons across the mitochondrial inner membrane, with protons being carried across the membrane as hydrogens on the quinol. In the process called Q cycle, 2 protons are consumed from the matrix, 4 protons are released into the intermembrane space and 2 electrons are passed to cytochrome c.</text>
</comment>
<comment type="subunit">
    <text evidence="3 4">Component of the ubiquinol-cytochrome c oxidoreductase (cytochrome b-c1 complex, complex III, CIII), a multisubunit enzyme composed of 10 subunits. The complex is composed of 3 respiratory subunits cytochrome b (MT-CYB), cytochrome c1 (CYC1-1 or CYC1-2) and Rieske protein (UCR1-1 or UCR1-2), 2 core protein subunits MPPalpha1 (or MPPalpha2) and MPPB, and 5 low-molecular weight protein subunits QCR7-1 (or QCR7-2), UCRQ-1 (or UCRQ-2), QCR9, UCRY and probably QCR6-1 (or QCR6-2) (PubMed:18189341). The complex exists as an obligatory dimer and forms supercomplexes (SCs) in the inner mitochondrial membrane with NADH-ubiquinone oxidoreductase (complex I, CI), resulting in different assemblies (supercomplexes SCI(1)III(2) and SCI(2)III(4)) (PubMed:12970493).</text>
</comment>
<comment type="subcellular location">
    <subcellularLocation>
        <location evidence="1">Mitochondrion inner membrane</location>
        <topology evidence="1">Single-pass membrane protein</topology>
    </subcellularLocation>
</comment>
<comment type="similarity">
    <text evidence="5">Belongs to the UQCR11/QCR10 family.</text>
</comment>
<accession>Q94K78</accession>
<reference key="1">
    <citation type="journal article" date="1999" name="Nature">
        <title>Sequence and analysis of chromosome 2 of the plant Arabidopsis thaliana.</title>
        <authorList>
            <person name="Lin X."/>
            <person name="Kaul S."/>
            <person name="Rounsley S.D."/>
            <person name="Shea T.P."/>
            <person name="Benito M.-I."/>
            <person name="Town C.D."/>
            <person name="Fujii C.Y."/>
            <person name="Mason T.M."/>
            <person name="Bowman C.L."/>
            <person name="Barnstead M.E."/>
            <person name="Feldblyum T.V."/>
            <person name="Buell C.R."/>
            <person name="Ketchum K.A."/>
            <person name="Lee J.J."/>
            <person name="Ronning C.M."/>
            <person name="Koo H.L."/>
            <person name="Moffat K.S."/>
            <person name="Cronin L.A."/>
            <person name="Shen M."/>
            <person name="Pai G."/>
            <person name="Van Aken S."/>
            <person name="Umayam L."/>
            <person name="Tallon L.J."/>
            <person name="Gill J.E."/>
            <person name="Adams M.D."/>
            <person name="Carrera A.J."/>
            <person name="Creasy T.H."/>
            <person name="Goodman H.M."/>
            <person name="Somerville C.R."/>
            <person name="Copenhaver G.P."/>
            <person name="Preuss D."/>
            <person name="Nierman W.C."/>
            <person name="White O."/>
            <person name="Eisen J.A."/>
            <person name="Salzberg S.L."/>
            <person name="Fraser C.M."/>
            <person name="Venter J.C."/>
        </authorList>
    </citation>
    <scope>NUCLEOTIDE SEQUENCE [LARGE SCALE GENOMIC DNA]</scope>
    <source>
        <strain>cv. Columbia</strain>
    </source>
</reference>
<reference key="2">
    <citation type="journal article" date="2017" name="Plant J.">
        <title>Araport11: a complete reannotation of the Arabidopsis thaliana reference genome.</title>
        <authorList>
            <person name="Cheng C.Y."/>
            <person name="Krishnakumar V."/>
            <person name="Chan A.P."/>
            <person name="Thibaud-Nissen F."/>
            <person name="Schobel S."/>
            <person name="Town C.D."/>
        </authorList>
    </citation>
    <scope>GENOME REANNOTATION</scope>
    <source>
        <strain>cv. Columbia</strain>
    </source>
</reference>
<reference key="3">
    <citation type="journal article" date="2003" name="Science">
        <title>Empirical analysis of transcriptional activity in the Arabidopsis genome.</title>
        <authorList>
            <person name="Yamada K."/>
            <person name="Lim J."/>
            <person name="Dale J.M."/>
            <person name="Chen H."/>
            <person name="Shinn P."/>
            <person name="Palm C.J."/>
            <person name="Southwick A.M."/>
            <person name="Wu H.C."/>
            <person name="Kim C.J."/>
            <person name="Nguyen M."/>
            <person name="Pham P.K."/>
            <person name="Cheuk R.F."/>
            <person name="Karlin-Newmann G."/>
            <person name="Liu S.X."/>
            <person name="Lam B."/>
            <person name="Sakano H."/>
            <person name="Wu T."/>
            <person name="Yu G."/>
            <person name="Miranda M."/>
            <person name="Quach H.L."/>
            <person name="Tripp M."/>
            <person name="Chang C.H."/>
            <person name="Lee J.M."/>
            <person name="Toriumi M.J."/>
            <person name="Chan M.M."/>
            <person name="Tang C.C."/>
            <person name="Onodera C.S."/>
            <person name="Deng J.M."/>
            <person name="Akiyama K."/>
            <person name="Ansari Y."/>
            <person name="Arakawa T."/>
            <person name="Banh J."/>
            <person name="Banno F."/>
            <person name="Bowser L."/>
            <person name="Brooks S.Y."/>
            <person name="Carninci P."/>
            <person name="Chao Q."/>
            <person name="Choy N."/>
            <person name="Enju A."/>
            <person name="Goldsmith A.D."/>
            <person name="Gurjal M."/>
            <person name="Hansen N.F."/>
            <person name="Hayashizaki Y."/>
            <person name="Johnson-Hopson C."/>
            <person name="Hsuan V.W."/>
            <person name="Iida K."/>
            <person name="Karnes M."/>
            <person name="Khan S."/>
            <person name="Koesema E."/>
            <person name="Ishida J."/>
            <person name="Jiang P.X."/>
            <person name="Jones T."/>
            <person name="Kawai J."/>
            <person name="Kamiya A."/>
            <person name="Meyers C."/>
            <person name="Nakajima M."/>
            <person name="Narusaka M."/>
            <person name="Seki M."/>
            <person name="Sakurai T."/>
            <person name="Satou M."/>
            <person name="Tamse R."/>
            <person name="Vaysberg M."/>
            <person name="Wallender E.K."/>
            <person name="Wong C."/>
            <person name="Yamamura Y."/>
            <person name="Yuan S."/>
            <person name="Shinozaki K."/>
            <person name="Davis R.W."/>
            <person name="Theologis A."/>
            <person name="Ecker J.R."/>
        </authorList>
    </citation>
    <scope>NUCLEOTIDE SEQUENCE [LARGE SCALE MRNA]</scope>
    <source>
        <strain>cv. Columbia</strain>
    </source>
</reference>
<reference key="4">
    <citation type="submission" date="2002-03" db="EMBL/GenBank/DDBJ databases">
        <title>Full-length cDNA from Arabidopsis thaliana.</title>
        <authorList>
            <person name="Brover V.V."/>
            <person name="Troukhan M.E."/>
            <person name="Alexandrov N.A."/>
            <person name="Lu Y.-P."/>
            <person name="Flavell R.B."/>
            <person name="Feldmann K.A."/>
        </authorList>
    </citation>
    <scope>NUCLEOTIDE SEQUENCE [LARGE SCALE MRNA]</scope>
</reference>
<reference key="5">
    <citation type="journal article" date="2003" name="Plant Physiol.">
        <title>New insights into the respiratory chain of plant mitochondria. Supercomplexes and a unique composition of complex II.</title>
        <authorList>
            <person name="Eubel H."/>
            <person name="Jansch L."/>
            <person name="Braun H.P."/>
        </authorList>
    </citation>
    <scope>SUBUNIT</scope>
</reference>
<reference key="6">
    <citation type="journal article" date="2008" name="J. Proteome Res.">
        <title>Resolving and identifying protein components of plant mitochondrial respiratory complexes using three dimensions of gel electrophoresis.</title>
        <authorList>
            <person name="Meyer E.H."/>
            <person name="Taylor N.L."/>
            <person name="Millar A.H."/>
        </authorList>
    </citation>
    <scope>SUBCELLULAR LOCATION</scope>
    <scope>SUBUNIT</scope>
    <scope>IDENTIFICATION BY MASS SPECTROMETRY</scope>
</reference>
<name>UCRY_ARATH</name>
<evidence type="ECO:0000250" key="1">
    <source>
        <dbReference type="UniProtKB" id="P37299"/>
    </source>
</evidence>
<evidence type="ECO:0000255" key="2"/>
<evidence type="ECO:0000269" key="3">
    <source>
    </source>
</evidence>
<evidence type="ECO:0000269" key="4">
    <source>
    </source>
</evidence>
<evidence type="ECO:0000305" key="5"/>
<evidence type="ECO:0000312" key="6">
    <source>
        <dbReference type="Araport" id="AT2G40765"/>
    </source>
</evidence>
<evidence type="ECO:0007829" key="7">
    <source>
        <dbReference type="PDB" id="8BEL"/>
    </source>
</evidence>
<protein>
    <recommendedName>
        <fullName>Cytochrome b-c1 complex subunit 10, mitochondrial</fullName>
    </recommendedName>
    <alternativeName>
        <fullName>Complex III subunit 10</fullName>
    </alternativeName>
    <alternativeName>
        <fullName>Complex III subunit XI</fullName>
    </alternativeName>
    <alternativeName>
        <fullName>Ubiquinol-cytochrome c oxidoreductase subunit 10</fullName>
    </alternativeName>
</protein>
<proteinExistence type="evidence at protein level"/>
<feature type="chain" id="PRO_0000449258" description="Cytochrome b-c1 complex subunit 10, mitochondrial">
    <location>
        <begin position="1"/>
        <end position="57"/>
    </location>
</feature>
<feature type="topological domain" description="Mitochondrial matrix" evidence="1">
    <location>
        <begin position="1"/>
        <end position="23"/>
    </location>
</feature>
<feature type="transmembrane region" description="Helical" evidence="2">
    <location>
        <begin position="24"/>
        <end position="44"/>
    </location>
</feature>
<feature type="topological domain" description="Mitochondrial intermembrane" evidence="1">
    <location>
        <begin position="45"/>
        <end position="57"/>
    </location>
</feature>
<feature type="helix" evidence="7">
    <location>
        <begin position="19"/>
        <end position="37"/>
    </location>
</feature>
<feature type="turn" evidence="7">
    <location>
        <begin position="41"/>
        <end position="43"/>
    </location>
</feature>